<name>SPT21_HUMAN</name>
<feature type="chain" id="PRO_0000330686" description="Spermatogenesis-associated protein 21">
    <location>
        <begin position="1"/>
        <end position="469"/>
    </location>
</feature>
<feature type="domain" description="EF-hand" evidence="3">
    <location>
        <begin position="255"/>
        <end position="290"/>
    </location>
</feature>
<feature type="region of interest" description="Disordered" evidence="4">
    <location>
        <begin position="1"/>
        <end position="76"/>
    </location>
</feature>
<feature type="region of interest" description="Disordered" evidence="4">
    <location>
        <begin position="99"/>
        <end position="157"/>
    </location>
</feature>
<feature type="region of interest" description="Disordered" evidence="4">
    <location>
        <begin position="424"/>
        <end position="469"/>
    </location>
</feature>
<feature type="coiled-coil region" evidence="2">
    <location>
        <begin position="198"/>
        <end position="225"/>
    </location>
</feature>
<feature type="compositionally biased region" description="Basic and acidic residues" evidence="4">
    <location>
        <begin position="49"/>
        <end position="61"/>
    </location>
</feature>
<feature type="compositionally biased region" description="Low complexity" evidence="4">
    <location>
        <begin position="62"/>
        <end position="73"/>
    </location>
</feature>
<feature type="compositionally biased region" description="Polar residues" evidence="4">
    <location>
        <begin position="105"/>
        <end position="132"/>
    </location>
</feature>
<feature type="compositionally biased region" description="Pro residues" evidence="4">
    <location>
        <begin position="146"/>
        <end position="157"/>
    </location>
</feature>
<feature type="compositionally biased region" description="Basic and acidic residues" evidence="4">
    <location>
        <begin position="450"/>
        <end position="459"/>
    </location>
</feature>
<feature type="binding site" evidence="3">
    <location>
        <position position="268"/>
    </location>
    <ligand>
        <name>Ca(2+)</name>
        <dbReference type="ChEBI" id="CHEBI:29108"/>
    </ligand>
</feature>
<feature type="binding site" evidence="3">
    <location>
        <position position="270"/>
    </location>
    <ligand>
        <name>Ca(2+)</name>
        <dbReference type="ChEBI" id="CHEBI:29108"/>
    </ligand>
</feature>
<feature type="binding site" evidence="3">
    <location>
        <position position="272"/>
    </location>
    <ligand>
        <name>Ca(2+)</name>
        <dbReference type="ChEBI" id="CHEBI:29108"/>
    </ligand>
</feature>
<feature type="binding site" evidence="3">
    <location>
        <position position="274"/>
    </location>
    <ligand>
        <name>Ca(2+)</name>
        <dbReference type="ChEBI" id="CHEBI:29108"/>
    </ligand>
</feature>
<feature type="binding site" evidence="3">
    <location>
        <position position="279"/>
    </location>
    <ligand>
        <name>Ca(2+)</name>
        <dbReference type="ChEBI" id="CHEBI:29108"/>
    </ligand>
</feature>
<feature type="splice variant" id="VSP_053865" description="In isoform 2." evidence="7">
    <original>MDNRNTQMYTEEEKTVNPFLPSTPGPKKAKGGGEAVETHPAPGPLPPP</original>
    <variation>MAQPGAVEHACHPSTLGGQGGGSLE</variation>
    <location>
        <begin position="1"/>
        <end position="48"/>
    </location>
</feature>
<feature type="sequence variant" id="VAR_042711" description="In a breast cancer sample; somatic mutation; dbSNP:rs1343712054." evidence="6">
    <original>P</original>
    <variation>S</variation>
    <location>
        <position position="24"/>
    </location>
</feature>
<feature type="sequence variant" id="VAR_042712" description="In dbSNP:rs12087671.">
    <original>I</original>
    <variation>L</variation>
    <location>
        <position position="53"/>
    </location>
</feature>
<feature type="sequence variant" id="VAR_042713" description="In dbSNP:rs4661746.">
    <original>Q</original>
    <variation>R</variation>
    <location>
        <position position="184"/>
    </location>
</feature>
<feature type="sequence variant" id="VAR_042714" description="In dbSNP:rs525409." evidence="5">
    <original>V</original>
    <variation>L</variation>
    <location>
        <position position="255"/>
    </location>
</feature>
<feature type="sequence variant" id="VAR_042715" description="In dbSNP:rs12133574.">
    <original>N</original>
    <variation>K</variation>
    <location>
        <position position="390"/>
    </location>
</feature>
<feature type="sequence conflict" description="In Ref. 4; AAI50599." evidence="8" ref="4">
    <original>R</original>
    <variation>C</variation>
    <location>
        <position position="417"/>
    </location>
</feature>
<keyword id="KW-0025">Alternative splicing</keyword>
<keyword id="KW-0106">Calcium</keyword>
<keyword id="KW-0175">Coiled coil</keyword>
<keyword id="KW-0479">Metal-binding</keyword>
<keyword id="KW-1185">Reference proteome</keyword>
<sequence>MDNRNTQMYTEEEKTVNPFLPSTPGPKKAKGGGEAVETHPAPGPLPPPEVRDIGERREPDRAQQQPQKPAVAAGTQSLGNFRQGFMKCLLEVEKMEASHRRASKARSQTAQKSPRTLTPVPTSAPSLPQTPASVPASGPSWARLPAPGPEPAPMGAPVPTSMPCPVLLGPALDLGWRRMELLHQSSERTLSYAKARQEPEEQSLQKLYQNREKSEEQLTLKQEEAFRSYFEIFNGPGEVDAQSLKNILLLMGFSVTLAQVEDALMSADVNGDGRVDFKDFLAVMTDTRRFFCSVEQNALSDMAPHNPHTLLFEILSLLVEMLALPEAVLEEITNYYQKKLKEGTCKAQEMEAAVGRLRLQKLPYNPQQEESSEVPERKVLSILSRLKQQNYAPNLQSPYAQVPCILLCPQLDKKMVRRQPSNHYALDQCTPPGLDPDIRSPFFQSGSQGNREHNSDSRKWLSSVPARTH</sequence>
<protein>
    <recommendedName>
        <fullName>Spermatogenesis-associated protein 21</fullName>
    </recommendedName>
</protein>
<gene>
    <name type="primary">SPATA21</name>
</gene>
<comment type="function">
    <text evidence="1">Involved in the differentiation of haploid spermatids.</text>
</comment>
<comment type="alternative products">
    <event type="alternative splicing"/>
    <isoform>
        <id>Q7Z572-1</id>
        <name>1</name>
        <sequence type="displayed"/>
    </isoform>
    <isoform>
        <id>Q7Z572-2</id>
        <name>2</name>
        <sequence type="described" ref="VSP_053865"/>
    </isoform>
</comment>
<evidence type="ECO:0000250" key="1"/>
<evidence type="ECO:0000255" key="2"/>
<evidence type="ECO:0000255" key="3">
    <source>
        <dbReference type="PROSITE-ProRule" id="PRU00448"/>
    </source>
</evidence>
<evidence type="ECO:0000256" key="4">
    <source>
        <dbReference type="SAM" id="MobiDB-lite"/>
    </source>
</evidence>
<evidence type="ECO:0000269" key="5">
    <source>
    </source>
</evidence>
<evidence type="ECO:0000269" key="6">
    <source>
    </source>
</evidence>
<evidence type="ECO:0000303" key="7">
    <source>
    </source>
</evidence>
<evidence type="ECO:0000305" key="8"/>
<organism>
    <name type="scientific">Homo sapiens</name>
    <name type="common">Human</name>
    <dbReference type="NCBI Taxonomy" id="9606"/>
    <lineage>
        <taxon>Eukaryota</taxon>
        <taxon>Metazoa</taxon>
        <taxon>Chordata</taxon>
        <taxon>Craniata</taxon>
        <taxon>Vertebrata</taxon>
        <taxon>Euteleostomi</taxon>
        <taxon>Mammalia</taxon>
        <taxon>Eutheria</taxon>
        <taxon>Euarchontoglires</taxon>
        <taxon>Primates</taxon>
        <taxon>Haplorrhini</taxon>
        <taxon>Catarrhini</taxon>
        <taxon>Hominidae</taxon>
        <taxon>Homo</taxon>
    </lineage>
</organism>
<accession>Q7Z572</accession>
<accession>B9EK40</accession>
<accession>F5GXP5</accession>
<proteinExistence type="evidence at transcript level"/>
<dbReference type="EMBL" id="AY327405">
    <property type="protein sequence ID" value="AAP92797.1"/>
    <property type="molecule type" value="mRNA"/>
</dbReference>
<dbReference type="EMBL" id="AL358794">
    <property type="status" value="NOT_ANNOTATED_CDS"/>
    <property type="molecule type" value="Genomic_DNA"/>
</dbReference>
<dbReference type="EMBL" id="CH471167">
    <property type="protein sequence ID" value="EAW51779.1"/>
    <property type="molecule type" value="Genomic_DNA"/>
</dbReference>
<dbReference type="EMBL" id="BC150598">
    <property type="protein sequence ID" value="AAI50599.1"/>
    <property type="molecule type" value="mRNA"/>
</dbReference>
<dbReference type="CCDS" id="CCDS172.1">
    <molecule id="Q7Z572-1"/>
</dbReference>
<dbReference type="CCDS" id="CCDS85935.1">
    <molecule id="Q7Z572-2"/>
</dbReference>
<dbReference type="RefSeq" id="NP_001340278.1">
    <molecule id="Q7Z572-2"/>
    <property type="nucleotide sequence ID" value="NM_001353349.1"/>
</dbReference>
<dbReference type="RefSeq" id="NP_940948.1">
    <molecule id="Q7Z572-1"/>
    <property type="nucleotide sequence ID" value="NM_198546.1"/>
</dbReference>
<dbReference type="RefSeq" id="XP_016856713.1">
    <property type="nucleotide sequence ID" value="XM_017001224.1"/>
</dbReference>
<dbReference type="RefSeq" id="XP_047275650.1">
    <molecule id="Q7Z572-2"/>
    <property type="nucleotide sequence ID" value="XM_047419694.1"/>
</dbReference>
<dbReference type="RefSeq" id="XP_054188782.1">
    <molecule id="Q7Z572-2"/>
    <property type="nucleotide sequence ID" value="XM_054332807.1"/>
</dbReference>
<dbReference type="SMR" id="Q7Z572"/>
<dbReference type="BioGRID" id="131941">
    <property type="interactions" value="2"/>
</dbReference>
<dbReference type="FunCoup" id="Q7Z572">
    <property type="interactions" value="1"/>
</dbReference>
<dbReference type="IntAct" id="Q7Z572">
    <property type="interactions" value="1"/>
</dbReference>
<dbReference type="STRING" id="9606.ENSP00000335612"/>
<dbReference type="iPTMnet" id="Q7Z572"/>
<dbReference type="PhosphoSitePlus" id="Q7Z572"/>
<dbReference type="BioMuta" id="SPATA21"/>
<dbReference type="DMDM" id="215274212"/>
<dbReference type="MassIVE" id="Q7Z572"/>
<dbReference type="PaxDb" id="9606-ENSP00000335612"/>
<dbReference type="PeptideAtlas" id="Q7Z572"/>
<dbReference type="ProteomicsDB" id="24483"/>
<dbReference type="ProteomicsDB" id="69262">
    <molecule id="Q7Z572-1"/>
</dbReference>
<dbReference type="Antibodypedia" id="47956">
    <property type="antibodies" value="62 antibodies from 14 providers"/>
</dbReference>
<dbReference type="DNASU" id="374955"/>
<dbReference type="Ensembl" id="ENST00000335496.5">
    <molecule id="Q7Z572-1"/>
    <property type="protein sequence ID" value="ENSP00000335612.1"/>
    <property type="gene ID" value="ENSG00000187144.11"/>
</dbReference>
<dbReference type="Ensembl" id="ENST00000540400.1">
    <molecule id="Q7Z572-2"/>
    <property type="protein sequence ID" value="ENSP00000440046.1"/>
    <property type="gene ID" value="ENSG00000187144.11"/>
</dbReference>
<dbReference type="Ensembl" id="ENST00000707423.1">
    <molecule id="Q7Z572-1"/>
    <property type="protein sequence ID" value="ENSP00000516863.1"/>
    <property type="gene ID" value="ENSG00000291401.1"/>
</dbReference>
<dbReference type="Ensembl" id="ENST00000707425.1">
    <molecule id="Q7Z572-2"/>
    <property type="protein sequence ID" value="ENSP00000516865.1"/>
    <property type="gene ID" value="ENSG00000291401.1"/>
</dbReference>
<dbReference type="GeneID" id="374955"/>
<dbReference type="KEGG" id="hsa:374955"/>
<dbReference type="MANE-Select" id="ENST00000335496.5">
    <property type="protein sequence ID" value="ENSP00000335612.1"/>
    <property type="RefSeq nucleotide sequence ID" value="NM_198546.1"/>
    <property type="RefSeq protein sequence ID" value="NP_940948.1"/>
</dbReference>
<dbReference type="UCSC" id="uc001ayn.3">
    <molecule id="Q7Z572-1"/>
    <property type="organism name" value="human"/>
</dbReference>
<dbReference type="AGR" id="HGNC:28026"/>
<dbReference type="CTD" id="374955"/>
<dbReference type="DisGeNET" id="374955"/>
<dbReference type="GeneCards" id="SPATA21"/>
<dbReference type="HGNC" id="HGNC:28026">
    <property type="gene designation" value="SPATA21"/>
</dbReference>
<dbReference type="HPA" id="ENSG00000187144">
    <property type="expression patterns" value="Tissue enriched (testis)"/>
</dbReference>
<dbReference type="neXtProt" id="NX_Q7Z572"/>
<dbReference type="OpenTargets" id="ENSG00000187144"/>
<dbReference type="PharmGKB" id="PA142670886"/>
<dbReference type="VEuPathDB" id="HostDB:ENSG00000187144"/>
<dbReference type="eggNOG" id="KOG0027">
    <property type="taxonomic scope" value="Eukaryota"/>
</dbReference>
<dbReference type="GeneTree" id="ENSGT00940000162494"/>
<dbReference type="HOGENOM" id="CLU_028005_0_0_1"/>
<dbReference type="InParanoid" id="Q7Z572"/>
<dbReference type="OMA" id="PCIPLYP"/>
<dbReference type="OrthoDB" id="9834398at2759"/>
<dbReference type="PAN-GO" id="Q7Z572">
    <property type="GO annotations" value="0 GO annotations based on evolutionary models"/>
</dbReference>
<dbReference type="PhylomeDB" id="Q7Z572"/>
<dbReference type="TreeFam" id="TF328393"/>
<dbReference type="PathwayCommons" id="Q7Z572"/>
<dbReference type="SignaLink" id="Q7Z572"/>
<dbReference type="BioGRID-ORCS" id="374955">
    <property type="hits" value="10 hits in 1143 CRISPR screens"/>
</dbReference>
<dbReference type="ChiTaRS" id="SPATA21">
    <property type="organism name" value="human"/>
</dbReference>
<dbReference type="GenomeRNAi" id="374955"/>
<dbReference type="Pharos" id="Q7Z572">
    <property type="development level" value="Tdark"/>
</dbReference>
<dbReference type="PRO" id="PR:Q7Z572"/>
<dbReference type="Proteomes" id="UP000005640">
    <property type="component" value="Chromosome 1"/>
</dbReference>
<dbReference type="RNAct" id="Q7Z572">
    <property type="molecule type" value="protein"/>
</dbReference>
<dbReference type="Bgee" id="ENSG00000187144">
    <property type="expression patterns" value="Expressed in buccal mucosa cell and 118 other cell types or tissues"/>
</dbReference>
<dbReference type="ExpressionAtlas" id="Q7Z572">
    <property type="expression patterns" value="baseline and differential"/>
</dbReference>
<dbReference type="GO" id="GO:0005509">
    <property type="term" value="F:calcium ion binding"/>
    <property type="evidence" value="ECO:0007669"/>
    <property type="project" value="InterPro"/>
</dbReference>
<dbReference type="CDD" id="cd00051">
    <property type="entry name" value="EFh"/>
    <property type="match status" value="1"/>
</dbReference>
<dbReference type="Gene3D" id="1.10.238.10">
    <property type="entry name" value="EF-hand"/>
    <property type="match status" value="1"/>
</dbReference>
<dbReference type="InterPro" id="IPR011992">
    <property type="entry name" value="EF-hand-dom_pair"/>
</dbReference>
<dbReference type="InterPro" id="IPR018247">
    <property type="entry name" value="EF_Hand_1_Ca_BS"/>
</dbReference>
<dbReference type="InterPro" id="IPR002048">
    <property type="entry name" value="EF_hand_dom"/>
</dbReference>
<dbReference type="InterPro" id="IPR043520">
    <property type="entry name" value="SPT21"/>
</dbReference>
<dbReference type="PANTHER" id="PTHR47500">
    <property type="entry name" value="EF-HAND CALCIUM-BINDING DOMAIN-CONTAINING PROTEIN"/>
    <property type="match status" value="1"/>
</dbReference>
<dbReference type="PANTHER" id="PTHR47500:SF1">
    <property type="entry name" value="SPERMATOGENESIS-ASSOCIATED PROTEIN 21"/>
    <property type="match status" value="1"/>
</dbReference>
<dbReference type="SMART" id="SM00054">
    <property type="entry name" value="EFh"/>
    <property type="match status" value="1"/>
</dbReference>
<dbReference type="SUPFAM" id="SSF47473">
    <property type="entry name" value="EF-hand"/>
    <property type="match status" value="1"/>
</dbReference>
<dbReference type="PROSITE" id="PS00018">
    <property type="entry name" value="EF_HAND_1"/>
    <property type="match status" value="1"/>
</dbReference>
<dbReference type="PROSITE" id="PS50222">
    <property type="entry name" value="EF_HAND_2"/>
    <property type="match status" value="1"/>
</dbReference>
<reference key="1">
    <citation type="submission" date="2003-06" db="EMBL/GenBank/DDBJ databases">
        <authorList>
            <person name="Shan Y.X."/>
            <person name="Yu L."/>
        </authorList>
    </citation>
    <scope>NUCLEOTIDE SEQUENCE [MRNA] (ISOFORM 1)</scope>
</reference>
<reference key="2">
    <citation type="journal article" date="2006" name="Nature">
        <title>The DNA sequence and biological annotation of human chromosome 1.</title>
        <authorList>
            <person name="Gregory S.G."/>
            <person name="Barlow K.F."/>
            <person name="McLay K.E."/>
            <person name="Kaul R."/>
            <person name="Swarbreck D."/>
            <person name="Dunham A."/>
            <person name="Scott C.E."/>
            <person name="Howe K.L."/>
            <person name="Woodfine K."/>
            <person name="Spencer C.C.A."/>
            <person name="Jones M.C."/>
            <person name="Gillson C."/>
            <person name="Searle S."/>
            <person name="Zhou Y."/>
            <person name="Kokocinski F."/>
            <person name="McDonald L."/>
            <person name="Evans R."/>
            <person name="Phillips K."/>
            <person name="Atkinson A."/>
            <person name="Cooper R."/>
            <person name="Jones C."/>
            <person name="Hall R.E."/>
            <person name="Andrews T.D."/>
            <person name="Lloyd C."/>
            <person name="Ainscough R."/>
            <person name="Almeida J.P."/>
            <person name="Ambrose K.D."/>
            <person name="Anderson F."/>
            <person name="Andrew R.W."/>
            <person name="Ashwell R.I.S."/>
            <person name="Aubin K."/>
            <person name="Babbage A.K."/>
            <person name="Bagguley C.L."/>
            <person name="Bailey J."/>
            <person name="Beasley H."/>
            <person name="Bethel G."/>
            <person name="Bird C.P."/>
            <person name="Bray-Allen S."/>
            <person name="Brown J.Y."/>
            <person name="Brown A.J."/>
            <person name="Buckley D."/>
            <person name="Burton J."/>
            <person name="Bye J."/>
            <person name="Carder C."/>
            <person name="Chapman J.C."/>
            <person name="Clark S.Y."/>
            <person name="Clarke G."/>
            <person name="Clee C."/>
            <person name="Cobley V."/>
            <person name="Collier R.E."/>
            <person name="Corby N."/>
            <person name="Coville G.J."/>
            <person name="Davies J."/>
            <person name="Deadman R."/>
            <person name="Dunn M."/>
            <person name="Earthrowl M."/>
            <person name="Ellington A.G."/>
            <person name="Errington H."/>
            <person name="Frankish A."/>
            <person name="Frankland J."/>
            <person name="French L."/>
            <person name="Garner P."/>
            <person name="Garnett J."/>
            <person name="Gay L."/>
            <person name="Ghori M.R.J."/>
            <person name="Gibson R."/>
            <person name="Gilby L.M."/>
            <person name="Gillett W."/>
            <person name="Glithero R.J."/>
            <person name="Grafham D.V."/>
            <person name="Griffiths C."/>
            <person name="Griffiths-Jones S."/>
            <person name="Grocock R."/>
            <person name="Hammond S."/>
            <person name="Harrison E.S.I."/>
            <person name="Hart E."/>
            <person name="Haugen E."/>
            <person name="Heath P.D."/>
            <person name="Holmes S."/>
            <person name="Holt K."/>
            <person name="Howden P.J."/>
            <person name="Hunt A.R."/>
            <person name="Hunt S.E."/>
            <person name="Hunter G."/>
            <person name="Isherwood J."/>
            <person name="James R."/>
            <person name="Johnson C."/>
            <person name="Johnson D."/>
            <person name="Joy A."/>
            <person name="Kay M."/>
            <person name="Kershaw J.K."/>
            <person name="Kibukawa M."/>
            <person name="Kimberley A.M."/>
            <person name="King A."/>
            <person name="Knights A.J."/>
            <person name="Lad H."/>
            <person name="Laird G."/>
            <person name="Lawlor S."/>
            <person name="Leongamornlert D.A."/>
            <person name="Lloyd D.M."/>
            <person name="Loveland J."/>
            <person name="Lovell J."/>
            <person name="Lush M.J."/>
            <person name="Lyne R."/>
            <person name="Martin S."/>
            <person name="Mashreghi-Mohammadi M."/>
            <person name="Matthews L."/>
            <person name="Matthews N.S.W."/>
            <person name="McLaren S."/>
            <person name="Milne S."/>
            <person name="Mistry S."/>
            <person name="Moore M.J.F."/>
            <person name="Nickerson T."/>
            <person name="O'Dell C.N."/>
            <person name="Oliver K."/>
            <person name="Palmeiri A."/>
            <person name="Palmer S.A."/>
            <person name="Parker A."/>
            <person name="Patel D."/>
            <person name="Pearce A.V."/>
            <person name="Peck A.I."/>
            <person name="Pelan S."/>
            <person name="Phelps K."/>
            <person name="Phillimore B.J."/>
            <person name="Plumb R."/>
            <person name="Rajan J."/>
            <person name="Raymond C."/>
            <person name="Rouse G."/>
            <person name="Saenphimmachak C."/>
            <person name="Sehra H.K."/>
            <person name="Sheridan E."/>
            <person name="Shownkeen R."/>
            <person name="Sims S."/>
            <person name="Skuce C.D."/>
            <person name="Smith M."/>
            <person name="Steward C."/>
            <person name="Subramanian S."/>
            <person name="Sycamore N."/>
            <person name="Tracey A."/>
            <person name="Tromans A."/>
            <person name="Van Helmond Z."/>
            <person name="Wall M."/>
            <person name="Wallis J.M."/>
            <person name="White S."/>
            <person name="Whitehead S.L."/>
            <person name="Wilkinson J.E."/>
            <person name="Willey D.L."/>
            <person name="Williams H."/>
            <person name="Wilming L."/>
            <person name="Wray P.W."/>
            <person name="Wu Z."/>
            <person name="Coulson A."/>
            <person name="Vaudin M."/>
            <person name="Sulston J.E."/>
            <person name="Durbin R.M."/>
            <person name="Hubbard T."/>
            <person name="Wooster R."/>
            <person name="Dunham I."/>
            <person name="Carter N.P."/>
            <person name="McVean G."/>
            <person name="Ross M.T."/>
            <person name="Harrow J."/>
            <person name="Olson M.V."/>
            <person name="Beck S."/>
            <person name="Rogers J."/>
            <person name="Bentley D.R."/>
        </authorList>
    </citation>
    <scope>NUCLEOTIDE SEQUENCE [LARGE SCALE GENOMIC DNA]</scope>
</reference>
<reference key="3">
    <citation type="submission" date="2007-12" db="EMBL/GenBank/DDBJ databases">
        <authorList>
            <person name="Mural R.J."/>
            <person name="Istrail S."/>
            <person name="Sutton G.G."/>
            <person name="Florea L."/>
            <person name="Halpern A.L."/>
            <person name="Mobarry C.M."/>
            <person name="Lippert R."/>
            <person name="Walenz B."/>
            <person name="Shatkay H."/>
            <person name="Dew I."/>
            <person name="Miller J.R."/>
            <person name="Flanigan M.J."/>
            <person name="Edwards N.J."/>
            <person name="Bolanos R."/>
            <person name="Fasulo D."/>
            <person name="Halldorsson B.V."/>
            <person name="Hannenhalli S."/>
            <person name="Turner R."/>
            <person name="Yooseph S."/>
            <person name="Lu F."/>
            <person name="Nusskern D.R."/>
            <person name="Shue B.C."/>
            <person name="Zheng X.H."/>
            <person name="Zhong F."/>
            <person name="Delcher A.L."/>
            <person name="Huson D.H."/>
            <person name="Kravitz S.A."/>
            <person name="Mouchard L."/>
            <person name="Reinert K."/>
            <person name="Remington K.A."/>
            <person name="Clark A.G."/>
            <person name="Waterman M.S."/>
            <person name="Eichler E.E."/>
            <person name="Adams M.D."/>
            <person name="Hunkapiller M.W."/>
            <person name="Myers E.W."/>
            <person name="Venter J.C."/>
        </authorList>
    </citation>
    <scope>NUCLEOTIDE SEQUENCE [LARGE SCALE GENOMIC DNA]</scope>
</reference>
<reference key="4">
    <citation type="journal article" date="2004" name="Genome Res.">
        <title>The status, quality, and expansion of the NIH full-length cDNA project: the Mammalian Gene Collection (MGC).</title>
        <authorList>
            <consortium name="The MGC Project Team"/>
        </authorList>
    </citation>
    <scope>NUCLEOTIDE SEQUENCE [LARGE SCALE MRNA] (ISOFORM 2)</scope>
    <scope>VARIANT LEU-255</scope>
    <source>
        <tissue>Testis</tissue>
    </source>
</reference>
<reference key="5">
    <citation type="journal article" date="2006" name="Science">
        <title>The consensus coding sequences of human breast and colorectal cancers.</title>
        <authorList>
            <person name="Sjoeblom T."/>
            <person name="Jones S."/>
            <person name="Wood L.D."/>
            <person name="Parsons D.W."/>
            <person name="Lin J."/>
            <person name="Barber T.D."/>
            <person name="Mandelker D."/>
            <person name="Leary R.J."/>
            <person name="Ptak J."/>
            <person name="Silliman N."/>
            <person name="Szabo S."/>
            <person name="Buckhaults P."/>
            <person name="Farrell C."/>
            <person name="Meeh P."/>
            <person name="Markowitz S.D."/>
            <person name="Willis J."/>
            <person name="Dawson D."/>
            <person name="Willson J.K.V."/>
            <person name="Gazdar A.F."/>
            <person name="Hartigan J."/>
            <person name="Wu L."/>
            <person name="Liu C."/>
            <person name="Parmigiani G."/>
            <person name="Park B.H."/>
            <person name="Bachman K.E."/>
            <person name="Papadopoulos N."/>
            <person name="Vogelstein B."/>
            <person name="Kinzler K.W."/>
            <person name="Velculescu V.E."/>
        </authorList>
    </citation>
    <scope>VARIANT [LARGE SCALE ANALYSIS] SER-24</scope>
</reference>